<organism>
    <name type="scientific">Sinorhizobium fredii (strain NBRC 101917 / NGR234)</name>
    <dbReference type="NCBI Taxonomy" id="394"/>
    <lineage>
        <taxon>Bacteria</taxon>
        <taxon>Pseudomonadati</taxon>
        <taxon>Pseudomonadota</taxon>
        <taxon>Alphaproteobacteria</taxon>
        <taxon>Hyphomicrobiales</taxon>
        <taxon>Rhizobiaceae</taxon>
        <taxon>Sinorhizobium/Ensifer group</taxon>
        <taxon>Sinorhizobium</taxon>
    </lineage>
</organism>
<reference key="1">
    <citation type="journal article" date="1997" name="Nature">
        <title>Molecular basis of symbiosis between Rhizobium and legumes.</title>
        <authorList>
            <person name="Freiberg C.A."/>
            <person name="Fellay R."/>
            <person name="Bairoch A."/>
            <person name="Broughton W.J."/>
            <person name="Rosenthal A."/>
            <person name="Perret X."/>
        </authorList>
    </citation>
    <scope>NUCLEOTIDE SEQUENCE [LARGE SCALE GENOMIC DNA]</scope>
    <source>
        <strain>NBRC 101917 / NGR234</strain>
    </source>
</reference>
<reference key="2">
    <citation type="journal article" date="2009" name="Appl. Environ. Microbiol.">
        <title>Rhizobium sp. strain NGR234 possesses a remarkable number of secretion systems.</title>
        <authorList>
            <person name="Schmeisser C."/>
            <person name="Liesegang H."/>
            <person name="Krysciak D."/>
            <person name="Bakkou N."/>
            <person name="Le Quere A."/>
            <person name="Wollherr A."/>
            <person name="Heinemeyer I."/>
            <person name="Morgenstern B."/>
            <person name="Pommerening-Roeser A."/>
            <person name="Flores M."/>
            <person name="Palacios R."/>
            <person name="Brenner S."/>
            <person name="Gottschalk G."/>
            <person name="Schmitz R.A."/>
            <person name="Broughton W.J."/>
            <person name="Perret X."/>
            <person name="Strittmatter A.W."/>
            <person name="Streit W.R."/>
        </authorList>
    </citation>
    <scope>NUCLEOTIDE SEQUENCE [LARGE SCALE GENOMIC DNA]</scope>
    <source>
        <strain>NBRC 101917 / NGR234</strain>
    </source>
</reference>
<feature type="chain" id="PRO_0000109962" description="Uncharacterized protein y4hJ">
    <location>
        <begin position="1"/>
        <end position="260"/>
    </location>
</feature>
<feature type="domain" description="Radical SAM core" evidence="1">
    <location>
        <begin position="6"/>
        <end position="239"/>
    </location>
</feature>
<name>Y4HJ_SINFN</name>
<evidence type="ECO:0000255" key="1">
    <source>
        <dbReference type="PROSITE-ProRule" id="PRU01266"/>
    </source>
</evidence>
<accession>P55477</accession>
<dbReference type="EC" id="1.3.-.-"/>
<dbReference type="EMBL" id="U00090">
    <property type="protein sequence ID" value="AAB92448.1"/>
    <property type="molecule type" value="Genomic_DNA"/>
</dbReference>
<dbReference type="PIR" id="T10844">
    <property type="entry name" value="T10844"/>
</dbReference>
<dbReference type="RefSeq" id="NP_443886.1">
    <property type="nucleotide sequence ID" value="NC_000914.2"/>
</dbReference>
<dbReference type="SMR" id="P55477"/>
<dbReference type="KEGG" id="rhi:NGR_a03400"/>
<dbReference type="PATRIC" id="fig|394.7.peg.348"/>
<dbReference type="eggNOG" id="COG0635">
    <property type="taxonomic scope" value="Bacteria"/>
</dbReference>
<dbReference type="HOGENOM" id="CLU_093851_0_0_5"/>
<dbReference type="OrthoDB" id="9808022at2"/>
<dbReference type="Proteomes" id="UP000001054">
    <property type="component" value="Plasmid pNGR234a"/>
</dbReference>
<dbReference type="GO" id="GO:0005737">
    <property type="term" value="C:cytoplasm"/>
    <property type="evidence" value="ECO:0007669"/>
    <property type="project" value="TreeGrafter"/>
</dbReference>
<dbReference type="GO" id="GO:0051539">
    <property type="term" value="F:4 iron, 4 sulfur cluster binding"/>
    <property type="evidence" value="ECO:0007669"/>
    <property type="project" value="TreeGrafter"/>
</dbReference>
<dbReference type="GO" id="GO:0051989">
    <property type="term" value="F:coproporphyrinogen dehydrogenase activity"/>
    <property type="evidence" value="ECO:0007669"/>
    <property type="project" value="TreeGrafter"/>
</dbReference>
<dbReference type="GO" id="GO:0006782">
    <property type="term" value="P:protoporphyrinogen IX biosynthetic process"/>
    <property type="evidence" value="ECO:0007669"/>
    <property type="project" value="TreeGrafter"/>
</dbReference>
<dbReference type="CDD" id="cd01335">
    <property type="entry name" value="Radical_SAM"/>
    <property type="match status" value="1"/>
</dbReference>
<dbReference type="Gene3D" id="3.80.30.20">
    <property type="entry name" value="tm_1862 like domain"/>
    <property type="match status" value="1"/>
</dbReference>
<dbReference type="InterPro" id="IPR034505">
    <property type="entry name" value="Coproporphyrinogen-III_oxidase"/>
</dbReference>
<dbReference type="InterPro" id="IPR006638">
    <property type="entry name" value="Elp3/MiaA/NifB-like_rSAM"/>
</dbReference>
<dbReference type="InterPro" id="IPR007197">
    <property type="entry name" value="rSAM"/>
</dbReference>
<dbReference type="InterPro" id="IPR023404">
    <property type="entry name" value="rSAM_horseshoe"/>
</dbReference>
<dbReference type="PANTHER" id="PTHR13932">
    <property type="entry name" value="COPROPORPHYRINIGEN III OXIDASE"/>
    <property type="match status" value="1"/>
</dbReference>
<dbReference type="PANTHER" id="PTHR13932:SF6">
    <property type="entry name" value="OXYGEN-INDEPENDENT COPROPORPHYRINOGEN III OXIDASE"/>
    <property type="match status" value="1"/>
</dbReference>
<dbReference type="Pfam" id="PF04055">
    <property type="entry name" value="Radical_SAM"/>
    <property type="match status" value="1"/>
</dbReference>
<dbReference type="SMART" id="SM00729">
    <property type="entry name" value="Elp3"/>
    <property type="match status" value="1"/>
</dbReference>
<dbReference type="SUPFAM" id="SSF102114">
    <property type="entry name" value="Radical SAM enzymes"/>
    <property type="match status" value="1"/>
</dbReference>
<dbReference type="PROSITE" id="PS51918">
    <property type="entry name" value="RADICAL_SAM"/>
    <property type="match status" value="1"/>
</dbReference>
<keyword id="KW-0560">Oxidoreductase</keyword>
<keyword id="KW-0614">Plasmid</keyword>
<keyword id="KW-1185">Reference proteome</keyword>
<gene>
    <name type="ordered locus">NGR_a03400</name>
    <name type="ORF">y4hJ</name>
</gene>
<proteinExistence type="predicted"/>
<sequence>MAEELAGVRSGVVVSPHSDLSVDVLVLRISQQHNSSRRIDPRLSDGASEEISLVAAQAPQALPVSDVHFGGGTPTIIKPEDFLALMDLLRRSFAFRKTATIAVEIEPRTFTAEMAEALGAAEVSHVSLGVQSFDPIVQKATNRVQRKAQTTAAIENLRRIGISRINFDLMYGLPHQTVQSCVQSATAAVAMRPDRLAVFGYAHVPSYRKNQRLIDETALPDIAARAEQAVAVAETYLPNGAGAVAVLASLPLAAKSQPVL</sequence>
<geneLocation type="plasmid">
    <name>sym pNGR234a</name>
</geneLocation>
<protein>
    <recommendedName>
        <fullName>Uncharacterized protein y4hJ</fullName>
        <ecNumber>1.3.-.-</ecNumber>
    </recommendedName>
</protein>